<evidence type="ECO:0000250" key="1"/>
<evidence type="ECO:0000305" key="2"/>
<comment type="subcellular location">
    <subcellularLocation>
        <location evidence="1">Cytoplasm</location>
        <location evidence="1">Nucleoid</location>
    </subcellularLocation>
</comment>
<comment type="similarity">
    <text evidence="2">Belongs to the YejK family.</text>
</comment>
<organism>
    <name type="scientific">Vibrio vulnificus (strain YJ016)</name>
    <dbReference type="NCBI Taxonomy" id="196600"/>
    <lineage>
        <taxon>Bacteria</taxon>
        <taxon>Pseudomonadati</taxon>
        <taxon>Pseudomonadota</taxon>
        <taxon>Gammaproteobacteria</taxon>
        <taxon>Vibrionales</taxon>
        <taxon>Vibrionaceae</taxon>
        <taxon>Vibrio</taxon>
    </lineage>
</organism>
<feature type="chain" id="PRO_0000210924" description="Nucleoid-associated protein VV1167">
    <location>
        <begin position="1"/>
        <end position="333"/>
    </location>
</feature>
<protein>
    <recommendedName>
        <fullName>Nucleoid-associated protein VV1167</fullName>
    </recommendedName>
</protein>
<gene>
    <name type="ordered locus">VV1167</name>
</gene>
<accession>P60055</accession>
<dbReference type="EMBL" id="BA000037">
    <property type="protein sequence ID" value="BAC93931.1"/>
    <property type="molecule type" value="Genomic_DNA"/>
</dbReference>
<dbReference type="SMR" id="P60055"/>
<dbReference type="STRING" id="672.VV93_v1c10870"/>
<dbReference type="KEGG" id="vvy:VV1167"/>
<dbReference type="eggNOG" id="COG3081">
    <property type="taxonomic scope" value="Bacteria"/>
</dbReference>
<dbReference type="HOGENOM" id="CLU_063050_0_1_6"/>
<dbReference type="Proteomes" id="UP000002675">
    <property type="component" value="Chromosome I"/>
</dbReference>
<dbReference type="GO" id="GO:0043590">
    <property type="term" value="C:bacterial nucleoid"/>
    <property type="evidence" value="ECO:0007669"/>
    <property type="project" value="TreeGrafter"/>
</dbReference>
<dbReference type="GO" id="GO:0005737">
    <property type="term" value="C:cytoplasm"/>
    <property type="evidence" value="ECO:0007669"/>
    <property type="project" value="UniProtKB-UniRule"/>
</dbReference>
<dbReference type="GO" id="GO:0003690">
    <property type="term" value="F:double-stranded DNA binding"/>
    <property type="evidence" value="ECO:0007669"/>
    <property type="project" value="TreeGrafter"/>
</dbReference>
<dbReference type="GO" id="GO:0003727">
    <property type="term" value="F:single-stranded RNA binding"/>
    <property type="evidence" value="ECO:0007669"/>
    <property type="project" value="TreeGrafter"/>
</dbReference>
<dbReference type="HAMAP" id="MF_00730">
    <property type="entry name" value="NdpA"/>
    <property type="match status" value="1"/>
</dbReference>
<dbReference type="InterPro" id="IPR007358">
    <property type="entry name" value="Nucleoid_associated_NdpA"/>
</dbReference>
<dbReference type="NCBIfam" id="NF001557">
    <property type="entry name" value="PRK00378.1"/>
    <property type="match status" value="1"/>
</dbReference>
<dbReference type="PANTHER" id="PTHR38772">
    <property type="match status" value="1"/>
</dbReference>
<dbReference type="PANTHER" id="PTHR38772:SF1">
    <property type="entry name" value="NUCLEOID-ASSOCIATED PROTEIN YEJK"/>
    <property type="match status" value="1"/>
</dbReference>
<dbReference type="Pfam" id="PF04245">
    <property type="entry name" value="NA37"/>
    <property type="match status" value="1"/>
</dbReference>
<keyword id="KW-0963">Cytoplasm</keyword>
<proteinExistence type="inferred from homology"/>
<sequence>MSLHLSNVILHQLSKNDQDELMVNYRSESLVNDSSTENLVAELHRVFHSKAGKGFGCFQSDSEFQIWLNELQRGELNFYDFSQKCAVRLKEELAKYPFADEGILVFAEYQSLATDYLFVGILPLNQSLKVTEGLDISATDYLDINKMDIAARIDLSVYEADKESNRYLSYIKGRVGRKVADFFLDFLQAEVGLDSKQQNQVLMQALDDFCTDAKLEKQEVNEYKKQVYEYCNGQIKAGEEVEIRELSGELPPSPSGASFLEFTQEQGYGLEESFPADRGLVRKLTKYVGAGGGLNVSFDSLLLGERIFYDPETDTLTIKGTPPNLRDQLTRNR</sequence>
<reference key="1">
    <citation type="journal article" date="2003" name="Genome Res.">
        <title>Comparative genome analysis of Vibrio vulnificus, a marine pathogen.</title>
        <authorList>
            <person name="Chen C.-Y."/>
            <person name="Wu K.-M."/>
            <person name="Chang Y.-C."/>
            <person name="Chang C.-H."/>
            <person name="Tsai H.-C."/>
            <person name="Liao T.-L."/>
            <person name="Liu Y.-M."/>
            <person name="Chen H.-J."/>
            <person name="Shen A.B.-T."/>
            <person name="Li J.-C."/>
            <person name="Su T.-L."/>
            <person name="Shao C.-P."/>
            <person name="Lee C.-T."/>
            <person name="Hor L.-I."/>
            <person name="Tsai S.-F."/>
        </authorList>
    </citation>
    <scope>NUCLEOTIDE SEQUENCE [LARGE SCALE GENOMIC DNA]</scope>
    <source>
        <strain>YJ016</strain>
    </source>
</reference>
<name>NDPA1_VIBVY</name>